<evidence type="ECO:0000255" key="1">
    <source>
        <dbReference type="HAMAP-Rule" id="MF_00508"/>
    </source>
</evidence>
<evidence type="ECO:0000305" key="2"/>
<name>RS10_METHJ</name>
<dbReference type="EMBL" id="CP000254">
    <property type="protein sequence ID" value="ABD41324.1"/>
    <property type="molecule type" value="Genomic_DNA"/>
</dbReference>
<dbReference type="SMR" id="Q2FRI1"/>
<dbReference type="FunCoup" id="Q2FRI1">
    <property type="interactions" value="148"/>
</dbReference>
<dbReference type="STRING" id="323259.Mhun_1593"/>
<dbReference type="EnsemblBacteria" id="ABD41324">
    <property type="protein sequence ID" value="ABD41324"/>
    <property type="gene ID" value="Mhun_1593"/>
</dbReference>
<dbReference type="KEGG" id="mhu:Mhun_1593"/>
<dbReference type="eggNOG" id="arCOG01758">
    <property type="taxonomic scope" value="Archaea"/>
</dbReference>
<dbReference type="HOGENOM" id="CLU_122625_0_1_2"/>
<dbReference type="InParanoid" id="Q2FRI1"/>
<dbReference type="OrthoDB" id="371736at2157"/>
<dbReference type="Proteomes" id="UP000001941">
    <property type="component" value="Chromosome"/>
</dbReference>
<dbReference type="GO" id="GO:0015935">
    <property type="term" value="C:small ribosomal subunit"/>
    <property type="evidence" value="ECO:0007669"/>
    <property type="project" value="InterPro"/>
</dbReference>
<dbReference type="GO" id="GO:0003735">
    <property type="term" value="F:structural constituent of ribosome"/>
    <property type="evidence" value="ECO:0007669"/>
    <property type="project" value="InterPro"/>
</dbReference>
<dbReference type="GO" id="GO:0000049">
    <property type="term" value="F:tRNA binding"/>
    <property type="evidence" value="ECO:0007669"/>
    <property type="project" value="UniProtKB-UniRule"/>
</dbReference>
<dbReference type="GO" id="GO:0006412">
    <property type="term" value="P:translation"/>
    <property type="evidence" value="ECO:0007669"/>
    <property type="project" value="UniProtKB-UniRule"/>
</dbReference>
<dbReference type="FunFam" id="3.30.70.600:FF:000004">
    <property type="entry name" value="30S ribosomal protein S10"/>
    <property type="match status" value="1"/>
</dbReference>
<dbReference type="Gene3D" id="3.30.70.600">
    <property type="entry name" value="Ribosomal protein S10 domain"/>
    <property type="match status" value="1"/>
</dbReference>
<dbReference type="HAMAP" id="MF_00508">
    <property type="entry name" value="Ribosomal_uS10"/>
    <property type="match status" value="1"/>
</dbReference>
<dbReference type="InterPro" id="IPR001848">
    <property type="entry name" value="Ribosomal_uS10"/>
</dbReference>
<dbReference type="InterPro" id="IPR018268">
    <property type="entry name" value="Ribosomal_uS10_CS"/>
</dbReference>
<dbReference type="InterPro" id="IPR027486">
    <property type="entry name" value="Ribosomal_uS10_dom"/>
</dbReference>
<dbReference type="InterPro" id="IPR036838">
    <property type="entry name" value="Ribosomal_uS10_dom_sf"/>
</dbReference>
<dbReference type="InterPro" id="IPR005729">
    <property type="entry name" value="Ribosomal_uS10_euk/arc"/>
</dbReference>
<dbReference type="NCBIfam" id="TIGR01046">
    <property type="entry name" value="uS10_euk_arch"/>
    <property type="match status" value="1"/>
</dbReference>
<dbReference type="PANTHER" id="PTHR11700">
    <property type="entry name" value="30S RIBOSOMAL PROTEIN S10 FAMILY MEMBER"/>
    <property type="match status" value="1"/>
</dbReference>
<dbReference type="Pfam" id="PF00338">
    <property type="entry name" value="Ribosomal_S10"/>
    <property type="match status" value="1"/>
</dbReference>
<dbReference type="PRINTS" id="PR00971">
    <property type="entry name" value="RIBOSOMALS10"/>
</dbReference>
<dbReference type="SMART" id="SM01403">
    <property type="entry name" value="Ribosomal_S10"/>
    <property type="match status" value="1"/>
</dbReference>
<dbReference type="SUPFAM" id="SSF54999">
    <property type="entry name" value="Ribosomal protein S10"/>
    <property type="match status" value="1"/>
</dbReference>
<dbReference type="PROSITE" id="PS00361">
    <property type="entry name" value="RIBOSOMAL_S10"/>
    <property type="match status" value="1"/>
</dbReference>
<proteinExistence type="inferred from homology"/>
<keyword id="KW-1185">Reference proteome</keyword>
<keyword id="KW-0687">Ribonucleoprotein</keyword>
<keyword id="KW-0689">Ribosomal protein</keyword>
<sequence length="102" mass="11717">MQKARIRLTGTDYQKVEEVCEKIKEIAERTGVNLAGPIPLPTRKLVVPIRKSPDGEGTATWDRWQMRVHKRLIDLDADERALRQLMRTQVPKDIGIEIVLES</sequence>
<organism>
    <name type="scientific">Methanospirillum hungatei JF-1 (strain ATCC 27890 / DSM 864 / NBRC 100397 / JF-1)</name>
    <dbReference type="NCBI Taxonomy" id="323259"/>
    <lineage>
        <taxon>Archaea</taxon>
        <taxon>Methanobacteriati</taxon>
        <taxon>Methanobacteriota</taxon>
        <taxon>Stenosarchaea group</taxon>
        <taxon>Methanomicrobia</taxon>
        <taxon>Methanomicrobiales</taxon>
        <taxon>Methanospirillaceae</taxon>
        <taxon>Methanospirillum</taxon>
    </lineage>
</organism>
<comment type="function">
    <text evidence="1">Involved in the binding of tRNA to the ribosomes.</text>
</comment>
<comment type="subunit">
    <text evidence="1">Part of the 30S ribosomal subunit.</text>
</comment>
<comment type="similarity">
    <text evidence="1">Belongs to the universal ribosomal protein uS10 family.</text>
</comment>
<feature type="chain" id="PRO_0000237124" description="Small ribosomal subunit protein uS10">
    <location>
        <begin position="1"/>
        <end position="102"/>
    </location>
</feature>
<reference key="1">
    <citation type="journal article" date="2016" name="Stand. Genomic Sci.">
        <title>Complete genome sequence of Methanospirillum hungatei type strain JF1.</title>
        <authorList>
            <person name="Gunsalus R.P."/>
            <person name="Cook L.E."/>
            <person name="Crable B."/>
            <person name="Rohlin L."/>
            <person name="McDonald E."/>
            <person name="Mouttaki H."/>
            <person name="Sieber J.R."/>
            <person name="Poweleit N."/>
            <person name="Zhou H."/>
            <person name="Lapidus A.L."/>
            <person name="Daligault H.E."/>
            <person name="Land M."/>
            <person name="Gilna P."/>
            <person name="Ivanova N."/>
            <person name="Kyrpides N."/>
            <person name="Culley D.E."/>
            <person name="McInerney M.J."/>
        </authorList>
    </citation>
    <scope>NUCLEOTIDE SEQUENCE [LARGE SCALE GENOMIC DNA]</scope>
    <source>
        <strain>ATCC 27890 / DSM 864 / NBRC 100397 / JF-1</strain>
    </source>
</reference>
<protein>
    <recommendedName>
        <fullName evidence="1">Small ribosomal subunit protein uS10</fullName>
    </recommendedName>
    <alternativeName>
        <fullName evidence="2">30S ribosomal protein S10</fullName>
    </alternativeName>
</protein>
<gene>
    <name evidence="1" type="primary">rps10</name>
    <name type="ordered locus">Mhun_1593</name>
</gene>
<accession>Q2FRI1</accession>